<proteinExistence type="inferred from homology"/>
<evidence type="ECO:0000255" key="1">
    <source>
        <dbReference type="HAMAP-Rule" id="MF_03142"/>
    </source>
</evidence>
<evidence type="ECO:0000255" key="2">
    <source>
        <dbReference type="PROSITE-ProRule" id="PRU01239"/>
    </source>
</evidence>
<evidence type="ECO:0000305" key="3"/>
<name>GFA_ASPTN</name>
<comment type="function">
    <text evidence="1">Catalyzes the condensation of formaldehyde and glutathione to S-hydroxymethylglutathione.</text>
</comment>
<comment type="catalytic activity">
    <reaction evidence="1">
        <text>S-(hydroxymethyl)glutathione = glutathione + formaldehyde</text>
        <dbReference type="Rhea" id="RHEA:22488"/>
        <dbReference type="ChEBI" id="CHEBI:16842"/>
        <dbReference type="ChEBI" id="CHEBI:57925"/>
        <dbReference type="ChEBI" id="CHEBI:58758"/>
        <dbReference type="EC" id="4.4.1.22"/>
    </reaction>
</comment>
<comment type="cofactor">
    <cofactor evidence="1 2">
        <name>Zn(2+)</name>
        <dbReference type="ChEBI" id="CHEBI:29105"/>
    </cofactor>
    <text evidence="1 2">Binds 2 Zn(2+) ions per subunit.</text>
</comment>
<comment type="pathway">
    <text evidence="1">One-carbon metabolism; formaldehyde degradation; formate from formaldehyde (glutathione route): step 1/3.</text>
</comment>
<comment type="similarity">
    <text evidence="3">Belongs to the Gfa family.</text>
</comment>
<accession>Q0CMY6</accession>
<organism>
    <name type="scientific">Aspergillus terreus (strain NIH 2624 / FGSC A1156)</name>
    <dbReference type="NCBI Taxonomy" id="341663"/>
    <lineage>
        <taxon>Eukaryota</taxon>
        <taxon>Fungi</taxon>
        <taxon>Dikarya</taxon>
        <taxon>Ascomycota</taxon>
        <taxon>Pezizomycotina</taxon>
        <taxon>Eurotiomycetes</taxon>
        <taxon>Eurotiomycetidae</taxon>
        <taxon>Eurotiales</taxon>
        <taxon>Aspergillaceae</taxon>
        <taxon>Aspergillus</taxon>
        <taxon>Aspergillus subgen. Circumdati</taxon>
    </lineage>
</organism>
<dbReference type="EC" id="4.4.1.22" evidence="1"/>
<dbReference type="EMBL" id="CH476600">
    <property type="protein sequence ID" value="EAU34017.1"/>
    <property type="molecule type" value="Genomic_DNA"/>
</dbReference>
<dbReference type="RefSeq" id="XP_001214126.1">
    <property type="nucleotide sequence ID" value="XM_001214126.1"/>
</dbReference>
<dbReference type="SMR" id="Q0CMY6"/>
<dbReference type="STRING" id="341663.Q0CMY6"/>
<dbReference type="EnsemblFungi" id="EAU34017">
    <property type="protein sequence ID" value="EAU34017"/>
    <property type="gene ID" value="ATEG_04948"/>
</dbReference>
<dbReference type="GeneID" id="4321195"/>
<dbReference type="VEuPathDB" id="FungiDB:ATEG_04948"/>
<dbReference type="eggNOG" id="ENOG502SKH9">
    <property type="taxonomic scope" value="Eukaryota"/>
</dbReference>
<dbReference type="HOGENOM" id="CLU_090716_0_0_1"/>
<dbReference type="OMA" id="ECGTHMY"/>
<dbReference type="OrthoDB" id="3446116at2759"/>
<dbReference type="UniPathway" id="UPA00562">
    <property type="reaction ID" value="UER00621"/>
</dbReference>
<dbReference type="Proteomes" id="UP000007963">
    <property type="component" value="Unassembled WGS sequence"/>
</dbReference>
<dbReference type="GO" id="GO:0051907">
    <property type="term" value="F:S-(hydroxymethyl)glutathione synthase activity"/>
    <property type="evidence" value="ECO:0007669"/>
    <property type="project" value="UniProtKB-UniRule"/>
</dbReference>
<dbReference type="GO" id="GO:0008270">
    <property type="term" value="F:zinc ion binding"/>
    <property type="evidence" value="ECO:0007669"/>
    <property type="project" value="UniProtKB-UniRule"/>
</dbReference>
<dbReference type="GO" id="GO:0046294">
    <property type="term" value="P:formaldehyde catabolic process"/>
    <property type="evidence" value="ECO:0007669"/>
    <property type="project" value="UniProtKB-UniRule"/>
</dbReference>
<dbReference type="Gene3D" id="3.90.1590.10">
    <property type="entry name" value="glutathione-dependent formaldehyde- activating enzyme (gfa)"/>
    <property type="match status" value="1"/>
</dbReference>
<dbReference type="HAMAP" id="MF_00723">
    <property type="entry name" value="Formald_GSH"/>
    <property type="match status" value="1"/>
</dbReference>
<dbReference type="InterPro" id="IPR006913">
    <property type="entry name" value="CENP-V/GFA"/>
</dbReference>
<dbReference type="InterPro" id="IPR014185">
    <property type="entry name" value="Formald_GSH"/>
</dbReference>
<dbReference type="InterPro" id="IPR011057">
    <property type="entry name" value="Mss4-like_sf"/>
</dbReference>
<dbReference type="NCBIfam" id="TIGR02820">
    <property type="entry name" value="formald_GSH"/>
    <property type="match status" value="1"/>
</dbReference>
<dbReference type="NCBIfam" id="NF003829">
    <property type="entry name" value="PRK05417.1"/>
    <property type="match status" value="1"/>
</dbReference>
<dbReference type="PANTHER" id="PTHR33337:SF40">
    <property type="entry name" value="CENP-V_GFA DOMAIN-CONTAINING PROTEIN-RELATED"/>
    <property type="match status" value="1"/>
</dbReference>
<dbReference type="PANTHER" id="PTHR33337">
    <property type="entry name" value="GFA DOMAIN-CONTAINING PROTEIN"/>
    <property type="match status" value="1"/>
</dbReference>
<dbReference type="Pfam" id="PF04828">
    <property type="entry name" value="GFA"/>
    <property type="match status" value="1"/>
</dbReference>
<dbReference type="PIRSF" id="PIRSF033318">
    <property type="entry name" value="Formald_GSH"/>
    <property type="match status" value="1"/>
</dbReference>
<dbReference type="SUPFAM" id="SSF51316">
    <property type="entry name" value="Mss4-like"/>
    <property type="match status" value="1"/>
</dbReference>
<dbReference type="PROSITE" id="PS51891">
    <property type="entry name" value="CENP_V_GFA"/>
    <property type="match status" value="1"/>
</dbReference>
<gene>
    <name type="ORF">ATEG_04948</name>
</gene>
<reference key="1">
    <citation type="submission" date="2005-09" db="EMBL/GenBank/DDBJ databases">
        <title>Annotation of the Aspergillus terreus NIH2624 genome.</title>
        <authorList>
            <person name="Birren B.W."/>
            <person name="Lander E.S."/>
            <person name="Galagan J.E."/>
            <person name="Nusbaum C."/>
            <person name="Devon K."/>
            <person name="Henn M."/>
            <person name="Ma L.-J."/>
            <person name="Jaffe D.B."/>
            <person name="Butler J."/>
            <person name="Alvarez P."/>
            <person name="Gnerre S."/>
            <person name="Grabherr M."/>
            <person name="Kleber M."/>
            <person name="Mauceli E.W."/>
            <person name="Brockman W."/>
            <person name="Rounsley S."/>
            <person name="Young S.K."/>
            <person name="LaButti K."/>
            <person name="Pushparaj V."/>
            <person name="DeCaprio D."/>
            <person name="Crawford M."/>
            <person name="Koehrsen M."/>
            <person name="Engels R."/>
            <person name="Montgomery P."/>
            <person name="Pearson M."/>
            <person name="Howarth C."/>
            <person name="Larson L."/>
            <person name="Luoma S."/>
            <person name="White J."/>
            <person name="Alvarado L."/>
            <person name="Kodira C.D."/>
            <person name="Zeng Q."/>
            <person name="Oleary S."/>
            <person name="Yandava C."/>
            <person name="Denning D.W."/>
            <person name="Nierman W.C."/>
            <person name="Milne T."/>
            <person name="Madden K."/>
        </authorList>
    </citation>
    <scope>NUCLEOTIDE SEQUENCE [LARGE SCALE GENOMIC DNA]</scope>
    <source>
        <strain>NIH 2624 / FGSC A1156</strain>
    </source>
</reference>
<protein>
    <recommendedName>
        <fullName evidence="1">Putative glutathione-dependent formaldehyde-activating enzyme</fullName>
        <ecNumber evidence="1">4.4.1.22</ecNumber>
    </recommendedName>
    <alternativeName>
        <fullName evidence="1">S-(hydroxymethyl)glutathione synthase</fullName>
    </alternativeName>
</protein>
<keyword id="KW-0456">Lyase</keyword>
<keyword id="KW-0479">Metal-binding</keyword>
<keyword id="KW-1185">Reference proteome</keyword>
<keyword id="KW-0862">Zinc</keyword>
<feature type="chain" id="PRO_0000406156" description="Putative glutathione-dependent formaldehyde-activating enzyme">
    <location>
        <begin position="1"/>
        <end position="191"/>
    </location>
</feature>
<feature type="domain" description="CENP-V/GFA" evidence="2">
    <location>
        <begin position="20"/>
        <end position="166"/>
    </location>
</feature>
<feature type="binding site" evidence="1 2">
    <location>
        <position position="27"/>
    </location>
    <ligand>
        <name>Zn(2+)</name>
        <dbReference type="ChEBI" id="CHEBI:29105"/>
        <label>1</label>
        <note>structural</note>
    </ligand>
</feature>
<feature type="binding site" evidence="1 2">
    <location>
        <position position="29"/>
    </location>
    <ligand>
        <name>Zn(2+)</name>
        <dbReference type="ChEBI" id="CHEBI:29105"/>
        <label>1</label>
        <note>structural</note>
    </ligand>
</feature>
<feature type="binding site" evidence="1 2">
    <location>
        <position position="48"/>
    </location>
    <ligand>
        <name>Zn(2+)</name>
        <dbReference type="ChEBI" id="CHEBI:29105"/>
        <label>2</label>
        <note>catalytic</note>
    </ligand>
</feature>
<feature type="binding site" evidence="1 2">
    <location>
        <position position="50"/>
    </location>
    <ligand>
        <name>Zn(2+)</name>
        <dbReference type="ChEBI" id="CHEBI:29105"/>
        <label>2</label>
        <note>catalytic</note>
    </ligand>
</feature>
<feature type="binding site" evidence="1 2">
    <location>
        <position position="53"/>
    </location>
    <ligand>
        <name>Zn(2+)</name>
        <dbReference type="ChEBI" id="CHEBI:29105"/>
        <label>2</label>
        <note>catalytic</note>
    </ligand>
</feature>
<feature type="binding site" evidence="1 2">
    <location>
        <position position="95"/>
    </location>
    <ligand>
        <name>Zn(2+)</name>
        <dbReference type="ChEBI" id="CHEBI:29105"/>
        <label>1</label>
        <note>structural</note>
    </ligand>
</feature>
<feature type="binding site" evidence="1 2">
    <location>
        <position position="98"/>
    </location>
    <ligand>
        <name>Zn(2+)</name>
        <dbReference type="ChEBI" id="CHEBI:29105"/>
        <label>1</label>
        <note>structural</note>
    </ligand>
</feature>
<sequence length="191" mass="20896">MNPILHPLIDNGITPGDPNFAGGNLYCKCPQNKVTVTLKSNVAHNHACGCSKCWKPTGALFSVVGVVPRENLSVTANGDKLHVVDKNAVIQRNACRQCGVHMFGRIETEHPFKGLDFVHVELSDTRGWQEPQFAGFVSSIIEQGFDPSKMETVRSRFKAVGLETYDSLSPPLMDTIAAYTARKNGKLSARL</sequence>